<keyword id="KW-0687">Ribonucleoprotein</keyword>
<keyword id="KW-0689">Ribosomal protein</keyword>
<accession>A9KWB0</accession>
<organism>
    <name type="scientific">Shewanella baltica (strain OS195)</name>
    <dbReference type="NCBI Taxonomy" id="399599"/>
    <lineage>
        <taxon>Bacteria</taxon>
        <taxon>Pseudomonadati</taxon>
        <taxon>Pseudomonadota</taxon>
        <taxon>Gammaproteobacteria</taxon>
        <taxon>Alteromonadales</taxon>
        <taxon>Shewanellaceae</taxon>
        <taxon>Shewanella</taxon>
    </lineage>
</organism>
<reference key="1">
    <citation type="submission" date="2007-11" db="EMBL/GenBank/DDBJ databases">
        <title>Complete sequence of chromosome of Shewanella baltica OS195.</title>
        <authorList>
            <consortium name="US DOE Joint Genome Institute"/>
            <person name="Copeland A."/>
            <person name="Lucas S."/>
            <person name="Lapidus A."/>
            <person name="Barry K."/>
            <person name="Glavina del Rio T."/>
            <person name="Dalin E."/>
            <person name="Tice H."/>
            <person name="Pitluck S."/>
            <person name="Chain P."/>
            <person name="Malfatti S."/>
            <person name="Shin M."/>
            <person name="Vergez L."/>
            <person name="Schmutz J."/>
            <person name="Larimer F."/>
            <person name="Land M."/>
            <person name="Hauser L."/>
            <person name="Kyrpides N."/>
            <person name="Kim E."/>
            <person name="Brettar I."/>
            <person name="Rodrigues J."/>
            <person name="Konstantinidis K."/>
            <person name="Klappenbach J."/>
            <person name="Hofle M."/>
            <person name="Tiedje J."/>
            <person name="Richardson P."/>
        </authorList>
    </citation>
    <scope>NUCLEOTIDE SEQUENCE [LARGE SCALE GENOMIC DNA]</scope>
    <source>
        <strain>OS195</strain>
    </source>
</reference>
<dbReference type="EMBL" id="CP000891">
    <property type="protein sequence ID" value="ABX47390.1"/>
    <property type="molecule type" value="Genomic_DNA"/>
</dbReference>
<dbReference type="RefSeq" id="WP_006083592.1">
    <property type="nucleotide sequence ID" value="NC_009997.1"/>
</dbReference>
<dbReference type="SMR" id="A9KWB0"/>
<dbReference type="GeneID" id="90572199"/>
<dbReference type="KEGG" id="sbn:Sbal195_0208"/>
<dbReference type="HOGENOM" id="CLU_158491_1_2_6"/>
<dbReference type="Proteomes" id="UP000000770">
    <property type="component" value="Chromosome"/>
</dbReference>
<dbReference type="GO" id="GO:0022625">
    <property type="term" value="C:cytosolic large ribosomal subunit"/>
    <property type="evidence" value="ECO:0007669"/>
    <property type="project" value="TreeGrafter"/>
</dbReference>
<dbReference type="GO" id="GO:0003735">
    <property type="term" value="F:structural constituent of ribosome"/>
    <property type="evidence" value="ECO:0007669"/>
    <property type="project" value="InterPro"/>
</dbReference>
<dbReference type="GO" id="GO:0006412">
    <property type="term" value="P:translation"/>
    <property type="evidence" value="ECO:0007669"/>
    <property type="project" value="UniProtKB-UniRule"/>
</dbReference>
<dbReference type="CDD" id="cd00427">
    <property type="entry name" value="Ribosomal_L29_HIP"/>
    <property type="match status" value="1"/>
</dbReference>
<dbReference type="FunFam" id="1.10.287.310:FF:000001">
    <property type="entry name" value="50S ribosomal protein L29"/>
    <property type="match status" value="1"/>
</dbReference>
<dbReference type="Gene3D" id="1.10.287.310">
    <property type="match status" value="1"/>
</dbReference>
<dbReference type="HAMAP" id="MF_00374">
    <property type="entry name" value="Ribosomal_uL29"/>
    <property type="match status" value="1"/>
</dbReference>
<dbReference type="InterPro" id="IPR050063">
    <property type="entry name" value="Ribosomal_protein_uL29"/>
</dbReference>
<dbReference type="InterPro" id="IPR001854">
    <property type="entry name" value="Ribosomal_uL29"/>
</dbReference>
<dbReference type="InterPro" id="IPR018254">
    <property type="entry name" value="Ribosomal_uL29_CS"/>
</dbReference>
<dbReference type="InterPro" id="IPR036049">
    <property type="entry name" value="Ribosomal_uL29_sf"/>
</dbReference>
<dbReference type="NCBIfam" id="TIGR00012">
    <property type="entry name" value="L29"/>
    <property type="match status" value="1"/>
</dbReference>
<dbReference type="PANTHER" id="PTHR10916">
    <property type="entry name" value="60S RIBOSOMAL PROTEIN L35/50S RIBOSOMAL PROTEIN L29"/>
    <property type="match status" value="1"/>
</dbReference>
<dbReference type="PANTHER" id="PTHR10916:SF0">
    <property type="entry name" value="LARGE RIBOSOMAL SUBUNIT PROTEIN UL29C"/>
    <property type="match status" value="1"/>
</dbReference>
<dbReference type="Pfam" id="PF00831">
    <property type="entry name" value="Ribosomal_L29"/>
    <property type="match status" value="1"/>
</dbReference>
<dbReference type="SUPFAM" id="SSF46561">
    <property type="entry name" value="Ribosomal protein L29 (L29p)"/>
    <property type="match status" value="1"/>
</dbReference>
<dbReference type="PROSITE" id="PS00579">
    <property type="entry name" value="RIBOSOMAL_L29"/>
    <property type="match status" value="1"/>
</dbReference>
<proteinExistence type="inferred from homology"/>
<gene>
    <name evidence="1" type="primary">rpmC</name>
    <name type="ordered locus">Sbal195_0208</name>
</gene>
<comment type="similarity">
    <text evidence="1">Belongs to the universal ribosomal protein uL29 family.</text>
</comment>
<protein>
    <recommendedName>
        <fullName evidence="1">Large ribosomal subunit protein uL29</fullName>
    </recommendedName>
    <alternativeName>
        <fullName evidence="2">50S ribosomal protein L29</fullName>
    </alternativeName>
</protein>
<evidence type="ECO:0000255" key="1">
    <source>
        <dbReference type="HAMAP-Rule" id="MF_00374"/>
    </source>
</evidence>
<evidence type="ECO:0000305" key="2"/>
<name>RL29_SHEB9</name>
<sequence>MKASELREKSVEELNAELLGLLREQFNLRMQHATGQLTQTNQLKLVRRNIARVKTIITSKAGA</sequence>
<feature type="chain" id="PRO_1000079904" description="Large ribosomal subunit protein uL29">
    <location>
        <begin position="1"/>
        <end position="63"/>
    </location>
</feature>